<sequence length="245" mass="27993">MPYRKYREKKYETKYREAFKLFQEKIGITFTDEKLLIQAFTHSSYVNEHRKKPHEDNERLEFLGDAVLELTVSQYLFQKYPTMSEGELTKLRAAIVCEPSLVRFANELSFGSLVLLGKGEEMTGGRERPALLADVFEAFIGALYLDQGLETVWGFLKEIVYPKINEGAFSHVMDYKSQLQELIQRDGSGNIEYQILQEKGPAHNREFVSRVTLNNVALGLGSGKSKKEAEQQAAAEALKKLKEQL</sequence>
<accession>C1EP73</accession>
<keyword id="KW-0963">Cytoplasm</keyword>
<keyword id="KW-0255">Endonuclease</keyword>
<keyword id="KW-0378">Hydrolase</keyword>
<keyword id="KW-0460">Magnesium</keyword>
<keyword id="KW-0479">Metal-binding</keyword>
<keyword id="KW-0507">mRNA processing</keyword>
<keyword id="KW-0540">Nuclease</keyword>
<keyword id="KW-0694">RNA-binding</keyword>
<keyword id="KW-0698">rRNA processing</keyword>
<keyword id="KW-0699">rRNA-binding</keyword>
<keyword id="KW-0819">tRNA processing</keyword>
<dbReference type="EC" id="3.1.26.3" evidence="1"/>
<dbReference type="EMBL" id="CP001407">
    <property type="protein sequence ID" value="ACO31206.1"/>
    <property type="molecule type" value="Genomic_DNA"/>
</dbReference>
<dbReference type="SMR" id="C1EP73"/>
<dbReference type="KEGG" id="bcx:BCA_3949"/>
<dbReference type="PATRIC" id="fig|572264.18.peg.3905"/>
<dbReference type="Proteomes" id="UP000002210">
    <property type="component" value="Chromosome"/>
</dbReference>
<dbReference type="GO" id="GO:0005737">
    <property type="term" value="C:cytoplasm"/>
    <property type="evidence" value="ECO:0007669"/>
    <property type="project" value="UniProtKB-SubCell"/>
</dbReference>
<dbReference type="GO" id="GO:0003725">
    <property type="term" value="F:double-stranded RNA binding"/>
    <property type="evidence" value="ECO:0007669"/>
    <property type="project" value="TreeGrafter"/>
</dbReference>
<dbReference type="GO" id="GO:0046872">
    <property type="term" value="F:metal ion binding"/>
    <property type="evidence" value="ECO:0007669"/>
    <property type="project" value="UniProtKB-KW"/>
</dbReference>
<dbReference type="GO" id="GO:0004525">
    <property type="term" value="F:ribonuclease III activity"/>
    <property type="evidence" value="ECO:0007669"/>
    <property type="project" value="UniProtKB-UniRule"/>
</dbReference>
<dbReference type="GO" id="GO:0019843">
    <property type="term" value="F:rRNA binding"/>
    <property type="evidence" value="ECO:0007669"/>
    <property type="project" value="UniProtKB-KW"/>
</dbReference>
<dbReference type="GO" id="GO:0006397">
    <property type="term" value="P:mRNA processing"/>
    <property type="evidence" value="ECO:0007669"/>
    <property type="project" value="UniProtKB-UniRule"/>
</dbReference>
<dbReference type="GO" id="GO:0010468">
    <property type="term" value="P:regulation of gene expression"/>
    <property type="evidence" value="ECO:0007669"/>
    <property type="project" value="TreeGrafter"/>
</dbReference>
<dbReference type="GO" id="GO:0006364">
    <property type="term" value="P:rRNA processing"/>
    <property type="evidence" value="ECO:0007669"/>
    <property type="project" value="UniProtKB-UniRule"/>
</dbReference>
<dbReference type="GO" id="GO:0008033">
    <property type="term" value="P:tRNA processing"/>
    <property type="evidence" value="ECO:0007669"/>
    <property type="project" value="UniProtKB-KW"/>
</dbReference>
<dbReference type="CDD" id="cd10845">
    <property type="entry name" value="DSRM_RNAse_III_family"/>
    <property type="match status" value="1"/>
</dbReference>
<dbReference type="CDD" id="cd00593">
    <property type="entry name" value="RIBOc"/>
    <property type="match status" value="1"/>
</dbReference>
<dbReference type="FunFam" id="1.10.1520.10:FF:000001">
    <property type="entry name" value="Ribonuclease 3"/>
    <property type="match status" value="1"/>
</dbReference>
<dbReference type="FunFam" id="3.30.160.20:FF:000003">
    <property type="entry name" value="Ribonuclease 3"/>
    <property type="match status" value="1"/>
</dbReference>
<dbReference type="Gene3D" id="3.30.160.20">
    <property type="match status" value="1"/>
</dbReference>
<dbReference type="Gene3D" id="1.10.1520.10">
    <property type="entry name" value="Ribonuclease III domain"/>
    <property type="match status" value="1"/>
</dbReference>
<dbReference type="HAMAP" id="MF_00104">
    <property type="entry name" value="RNase_III"/>
    <property type="match status" value="1"/>
</dbReference>
<dbReference type="InterPro" id="IPR014720">
    <property type="entry name" value="dsRBD_dom"/>
</dbReference>
<dbReference type="InterPro" id="IPR011907">
    <property type="entry name" value="RNase_III"/>
</dbReference>
<dbReference type="InterPro" id="IPR000999">
    <property type="entry name" value="RNase_III_dom"/>
</dbReference>
<dbReference type="InterPro" id="IPR036389">
    <property type="entry name" value="RNase_III_sf"/>
</dbReference>
<dbReference type="NCBIfam" id="TIGR02191">
    <property type="entry name" value="RNaseIII"/>
    <property type="match status" value="1"/>
</dbReference>
<dbReference type="PANTHER" id="PTHR11207:SF0">
    <property type="entry name" value="RIBONUCLEASE 3"/>
    <property type="match status" value="1"/>
</dbReference>
<dbReference type="PANTHER" id="PTHR11207">
    <property type="entry name" value="RIBONUCLEASE III"/>
    <property type="match status" value="1"/>
</dbReference>
<dbReference type="Pfam" id="PF00035">
    <property type="entry name" value="dsrm"/>
    <property type="match status" value="1"/>
</dbReference>
<dbReference type="Pfam" id="PF14622">
    <property type="entry name" value="Ribonucleas_3_3"/>
    <property type="match status" value="1"/>
</dbReference>
<dbReference type="SMART" id="SM00358">
    <property type="entry name" value="DSRM"/>
    <property type="match status" value="1"/>
</dbReference>
<dbReference type="SMART" id="SM00535">
    <property type="entry name" value="RIBOc"/>
    <property type="match status" value="1"/>
</dbReference>
<dbReference type="SUPFAM" id="SSF54768">
    <property type="entry name" value="dsRNA-binding domain-like"/>
    <property type="match status" value="1"/>
</dbReference>
<dbReference type="SUPFAM" id="SSF69065">
    <property type="entry name" value="RNase III domain-like"/>
    <property type="match status" value="1"/>
</dbReference>
<dbReference type="PROSITE" id="PS50137">
    <property type="entry name" value="DS_RBD"/>
    <property type="match status" value="1"/>
</dbReference>
<dbReference type="PROSITE" id="PS00517">
    <property type="entry name" value="RNASE_3_1"/>
    <property type="match status" value="1"/>
</dbReference>
<dbReference type="PROSITE" id="PS50142">
    <property type="entry name" value="RNASE_3_2"/>
    <property type="match status" value="1"/>
</dbReference>
<organism>
    <name type="scientific">Bacillus cereus (strain 03BB102)</name>
    <dbReference type="NCBI Taxonomy" id="572264"/>
    <lineage>
        <taxon>Bacteria</taxon>
        <taxon>Bacillati</taxon>
        <taxon>Bacillota</taxon>
        <taxon>Bacilli</taxon>
        <taxon>Bacillales</taxon>
        <taxon>Bacillaceae</taxon>
        <taxon>Bacillus</taxon>
        <taxon>Bacillus cereus group</taxon>
    </lineage>
</organism>
<reference key="1">
    <citation type="submission" date="2009-02" db="EMBL/GenBank/DDBJ databases">
        <title>Genome sequence of Bacillus cereus 03BB102.</title>
        <authorList>
            <person name="Dodson R.J."/>
            <person name="Jackson P."/>
            <person name="Munk A.C."/>
            <person name="Brettin T."/>
            <person name="Bruce D."/>
            <person name="Detter C."/>
            <person name="Tapia R."/>
            <person name="Han C."/>
            <person name="Sutton G."/>
            <person name="Sims D."/>
        </authorList>
    </citation>
    <scope>NUCLEOTIDE SEQUENCE [LARGE SCALE GENOMIC DNA]</scope>
    <source>
        <strain>03BB102</strain>
    </source>
</reference>
<gene>
    <name evidence="1" type="primary">rnc</name>
    <name type="ordered locus">BCA_3949</name>
</gene>
<evidence type="ECO:0000255" key="1">
    <source>
        <dbReference type="HAMAP-Rule" id="MF_00104"/>
    </source>
</evidence>
<proteinExistence type="inferred from homology"/>
<name>RNC_BACC3</name>
<feature type="chain" id="PRO_1000194407" description="Ribonuclease 3">
    <location>
        <begin position="1"/>
        <end position="245"/>
    </location>
</feature>
<feature type="domain" description="RNase III" evidence="1">
    <location>
        <begin position="19"/>
        <end position="148"/>
    </location>
</feature>
<feature type="domain" description="DRBM" evidence="1">
    <location>
        <begin position="174"/>
        <end position="243"/>
    </location>
</feature>
<feature type="active site" evidence="1">
    <location>
        <position position="65"/>
    </location>
</feature>
<feature type="active site" evidence="1">
    <location>
        <position position="137"/>
    </location>
</feature>
<feature type="binding site" evidence="1">
    <location>
        <position position="61"/>
    </location>
    <ligand>
        <name>Mg(2+)</name>
        <dbReference type="ChEBI" id="CHEBI:18420"/>
    </ligand>
</feature>
<feature type="binding site" evidence="1">
    <location>
        <position position="134"/>
    </location>
    <ligand>
        <name>Mg(2+)</name>
        <dbReference type="ChEBI" id="CHEBI:18420"/>
    </ligand>
</feature>
<feature type="binding site" evidence="1">
    <location>
        <position position="137"/>
    </location>
    <ligand>
        <name>Mg(2+)</name>
        <dbReference type="ChEBI" id="CHEBI:18420"/>
    </ligand>
</feature>
<comment type="function">
    <text evidence="1">Digests double-stranded RNA. Involved in the processing of primary rRNA transcript to yield the immediate precursors to the large and small rRNAs (23S and 16S). Processes some mRNAs, and tRNAs when they are encoded in the rRNA operon. Processes pre-crRNA and tracrRNA of type II CRISPR loci if present in the organism.</text>
</comment>
<comment type="catalytic activity">
    <reaction evidence="1">
        <text>Endonucleolytic cleavage to 5'-phosphomonoester.</text>
        <dbReference type="EC" id="3.1.26.3"/>
    </reaction>
</comment>
<comment type="cofactor">
    <cofactor evidence="1">
        <name>Mg(2+)</name>
        <dbReference type="ChEBI" id="CHEBI:18420"/>
    </cofactor>
</comment>
<comment type="subunit">
    <text evidence="1">Homodimer.</text>
</comment>
<comment type="subcellular location">
    <subcellularLocation>
        <location evidence="1">Cytoplasm</location>
    </subcellularLocation>
</comment>
<comment type="similarity">
    <text evidence="1">Belongs to the ribonuclease III family.</text>
</comment>
<protein>
    <recommendedName>
        <fullName evidence="1">Ribonuclease 3</fullName>
        <ecNumber evidence="1">3.1.26.3</ecNumber>
    </recommendedName>
    <alternativeName>
        <fullName evidence="1">Ribonuclease III</fullName>
        <shortName evidence="1">RNase III</shortName>
    </alternativeName>
</protein>